<comment type="function">
    <text evidence="1">eIF-2 functions in the early steps of protein synthesis by forming a ternary complex with GTP and initiator tRNA.</text>
</comment>
<comment type="subunit">
    <text evidence="1">Heterotrimer composed of an alpha, a beta and a gamma chain.</text>
</comment>
<comment type="similarity">
    <text evidence="1">Belongs to the eIF-2-alpha family.</text>
</comment>
<evidence type="ECO:0000255" key="1">
    <source>
        <dbReference type="HAMAP-Rule" id="MF_00231"/>
    </source>
</evidence>
<keyword id="KW-0396">Initiation factor</keyword>
<keyword id="KW-0648">Protein biosynthesis</keyword>
<keyword id="KW-1185">Reference proteome</keyword>
<keyword id="KW-0694">RNA-binding</keyword>
<gene>
    <name evidence="1" type="primary">eif2a</name>
    <name type="ordered locus">PF1140</name>
</gene>
<dbReference type="EMBL" id="AE009950">
    <property type="protein sequence ID" value="AAL81264.1"/>
    <property type="molecule type" value="Genomic_DNA"/>
</dbReference>
<dbReference type="RefSeq" id="WP_011012280.1">
    <property type="nucleotide sequence ID" value="NZ_CP023154.1"/>
</dbReference>
<dbReference type="SMR" id="Q8U1R5"/>
<dbReference type="IntAct" id="Q8U1R5">
    <property type="interactions" value="1"/>
</dbReference>
<dbReference type="STRING" id="186497.PF1140"/>
<dbReference type="PaxDb" id="186497-PF1140"/>
<dbReference type="KEGG" id="pfu:PF1140"/>
<dbReference type="PATRIC" id="fig|186497.12.peg.1201"/>
<dbReference type="eggNOG" id="arCOG04107">
    <property type="taxonomic scope" value="Archaea"/>
</dbReference>
<dbReference type="HOGENOM" id="CLU_033458_0_2_2"/>
<dbReference type="OrthoDB" id="84794at2157"/>
<dbReference type="PhylomeDB" id="Q8U1R5"/>
<dbReference type="Proteomes" id="UP000001013">
    <property type="component" value="Chromosome"/>
</dbReference>
<dbReference type="GO" id="GO:0043022">
    <property type="term" value="F:ribosome binding"/>
    <property type="evidence" value="ECO:0007669"/>
    <property type="project" value="TreeGrafter"/>
</dbReference>
<dbReference type="GO" id="GO:0003723">
    <property type="term" value="F:RNA binding"/>
    <property type="evidence" value="ECO:0007669"/>
    <property type="project" value="UniProtKB-UniRule"/>
</dbReference>
<dbReference type="GO" id="GO:0003743">
    <property type="term" value="F:translation initiation factor activity"/>
    <property type="evidence" value="ECO:0007669"/>
    <property type="project" value="UniProtKB-UniRule"/>
</dbReference>
<dbReference type="CDD" id="cd04452">
    <property type="entry name" value="S1_IF2_alpha"/>
    <property type="match status" value="1"/>
</dbReference>
<dbReference type="FunFam" id="2.40.50.140:FF:000015">
    <property type="entry name" value="Eukaryotic translation initiation factor 2 subunit alpha"/>
    <property type="match status" value="1"/>
</dbReference>
<dbReference type="FunFam" id="1.10.150.190:FF:000006">
    <property type="entry name" value="Translation initiation factor 2 subunit alpha"/>
    <property type="match status" value="1"/>
</dbReference>
<dbReference type="FunFam" id="3.30.70.1130:FF:000002">
    <property type="entry name" value="Translation initiation factor 2 subunit alpha"/>
    <property type="match status" value="1"/>
</dbReference>
<dbReference type="Gene3D" id="3.30.70.1130">
    <property type="entry name" value="EIF_2_alpha"/>
    <property type="match status" value="1"/>
</dbReference>
<dbReference type="Gene3D" id="2.40.50.140">
    <property type="entry name" value="Nucleic acid-binding proteins"/>
    <property type="match status" value="1"/>
</dbReference>
<dbReference type="Gene3D" id="1.10.150.190">
    <property type="entry name" value="Translation initiation factor 2, subunit 1, domain 2"/>
    <property type="match status" value="1"/>
</dbReference>
<dbReference type="HAMAP" id="MF_00231">
    <property type="entry name" value="eIF_2_alpha"/>
    <property type="match status" value="1"/>
</dbReference>
<dbReference type="InterPro" id="IPR012340">
    <property type="entry name" value="NA-bd_OB-fold"/>
</dbReference>
<dbReference type="InterPro" id="IPR003029">
    <property type="entry name" value="S1_domain"/>
</dbReference>
<dbReference type="InterPro" id="IPR044126">
    <property type="entry name" value="S1_IF2_alpha"/>
</dbReference>
<dbReference type="InterPro" id="IPR022964">
    <property type="entry name" value="TIF2_asu_arc"/>
</dbReference>
<dbReference type="InterPro" id="IPR024055">
    <property type="entry name" value="TIF2_asu_C"/>
</dbReference>
<dbReference type="InterPro" id="IPR024054">
    <property type="entry name" value="TIF2_asu_middle_sf"/>
</dbReference>
<dbReference type="InterPro" id="IPR011488">
    <property type="entry name" value="TIF_2_asu"/>
</dbReference>
<dbReference type="NCBIfam" id="NF003062">
    <property type="entry name" value="PRK03987.1-1"/>
    <property type="match status" value="1"/>
</dbReference>
<dbReference type="NCBIfam" id="NF003064">
    <property type="entry name" value="PRK03987.1-4"/>
    <property type="match status" value="1"/>
</dbReference>
<dbReference type="NCBIfam" id="NF003066">
    <property type="entry name" value="PRK03987.1-6"/>
    <property type="match status" value="1"/>
</dbReference>
<dbReference type="PANTHER" id="PTHR10602">
    <property type="entry name" value="EUKARYOTIC TRANSLATION INITIATION FACTOR 2 SUBUNIT 1"/>
    <property type="match status" value="1"/>
</dbReference>
<dbReference type="PANTHER" id="PTHR10602:SF0">
    <property type="entry name" value="EUKARYOTIC TRANSLATION INITIATION FACTOR 2 SUBUNIT 1"/>
    <property type="match status" value="1"/>
</dbReference>
<dbReference type="Pfam" id="PF07541">
    <property type="entry name" value="EIF_2_alpha"/>
    <property type="match status" value="1"/>
</dbReference>
<dbReference type="Pfam" id="PF00575">
    <property type="entry name" value="S1"/>
    <property type="match status" value="1"/>
</dbReference>
<dbReference type="SMART" id="SM00316">
    <property type="entry name" value="S1"/>
    <property type="match status" value="1"/>
</dbReference>
<dbReference type="SUPFAM" id="SSF110993">
    <property type="entry name" value="eIF-2-alpha, C-terminal domain"/>
    <property type="match status" value="1"/>
</dbReference>
<dbReference type="SUPFAM" id="SSF116742">
    <property type="entry name" value="eIF2alpha middle domain-like"/>
    <property type="match status" value="1"/>
</dbReference>
<dbReference type="SUPFAM" id="SSF50249">
    <property type="entry name" value="Nucleic acid-binding proteins"/>
    <property type="match status" value="1"/>
</dbReference>
<dbReference type="PROSITE" id="PS50126">
    <property type="entry name" value="S1"/>
    <property type="match status" value="1"/>
</dbReference>
<protein>
    <recommendedName>
        <fullName evidence="1">Translation initiation factor 2 subunit alpha</fullName>
    </recommendedName>
    <alternativeName>
        <fullName evidence="1">aIF2-alpha</fullName>
    </alternativeName>
    <alternativeName>
        <fullName evidence="1">eIF-2-alpha</fullName>
    </alternativeName>
</protein>
<accession>Q8U1R5</accession>
<proteinExistence type="inferred from homology"/>
<sequence length="275" mass="31917">MPRRAREYPEEGELVVATVKRVHNYGAFLDLDEYPGKEGFMHISEVASTWVKNIRDYLREGQKVVAKVIRVDPKKGHIDLSLRRVTQQQRKAKLQEFKRAQKAENLLKLAAEKLGKDFEEAWREVWVPLENEWGEVYAAFEDAARNGIEVLKGYVPDEWLPVLKEIIDSYVEVPTVTIDAEFEITVPKPNGIEIIKEALIKARDRANQEKDIEVKFTYLGAPRYRIDITAPDYYKAEEVLEDIAEEILRVIKEAGGEATLLRKEKRIRKVKKRKK</sequence>
<reference key="1">
    <citation type="journal article" date="1999" name="Genetics">
        <title>Divergence of the hyperthermophilic archaea Pyrococcus furiosus and P. horikoshii inferred from complete genomic sequences.</title>
        <authorList>
            <person name="Maeder D.L."/>
            <person name="Weiss R.B."/>
            <person name="Dunn D.M."/>
            <person name="Cherry J.L."/>
            <person name="Gonzalez J.M."/>
            <person name="DiRuggiero J."/>
            <person name="Robb F.T."/>
        </authorList>
    </citation>
    <scope>NUCLEOTIDE SEQUENCE [LARGE SCALE GENOMIC DNA]</scope>
    <source>
        <strain>ATCC 43587 / DSM 3638 / JCM 8422 / Vc1</strain>
    </source>
</reference>
<feature type="chain" id="PRO_0000137399" description="Translation initiation factor 2 subunit alpha">
    <location>
        <begin position="1"/>
        <end position="275"/>
    </location>
</feature>
<feature type="domain" description="S1 motif" evidence="1">
    <location>
        <begin position="12"/>
        <end position="83"/>
    </location>
</feature>
<name>IF2A_PYRFU</name>
<organism>
    <name type="scientific">Pyrococcus furiosus (strain ATCC 43587 / DSM 3638 / JCM 8422 / Vc1)</name>
    <dbReference type="NCBI Taxonomy" id="186497"/>
    <lineage>
        <taxon>Archaea</taxon>
        <taxon>Methanobacteriati</taxon>
        <taxon>Methanobacteriota</taxon>
        <taxon>Thermococci</taxon>
        <taxon>Thermococcales</taxon>
        <taxon>Thermococcaceae</taxon>
        <taxon>Pyrococcus</taxon>
    </lineage>
</organism>